<organism>
    <name type="scientific">Polaromonas naphthalenivorans (strain CJ2)</name>
    <dbReference type="NCBI Taxonomy" id="365044"/>
    <lineage>
        <taxon>Bacteria</taxon>
        <taxon>Pseudomonadati</taxon>
        <taxon>Pseudomonadota</taxon>
        <taxon>Betaproteobacteria</taxon>
        <taxon>Burkholderiales</taxon>
        <taxon>Comamonadaceae</taxon>
        <taxon>Polaromonas</taxon>
    </lineage>
</organism>
<gene>
    <name evidence="1" type="primary">bpt</name>
    <name type="ordered locus">Pnap_1724</name>
</gene>
<protein>
    <recommendedName>
        <fullName evidence="1">Aspartate/glutamate leucyltransferase</fullName>
        <ecNumber evidence="1">2.3.2.29</ecNumber>
    </recommendedName>
</protein>
<feature type="chain" id="PRO_1000045140" description="Aspartate/glutamate leucyltransferase">
    <location>
        <begin position="1"/>
        <end position="253"/>
    </location>
</feature>
<sequence length="253" mass="29064">MTHLKDLPLHTLQFYATAPYPCSYLPGRQARSQVATPSHLIHNNAYSELVTQGFRRSGMFTYRPYCDGCQACVPLRVPVSTFQPDRSQRRAWKRHQKLLVSSLKLCFLPEHYQLYLRYQNSRHAGGGMDHDSIDQYTQFLLQSRVNSRLVEFRECLPNGEAGALKMISILDVLEDGISAVYTFYEPEDQAGYGNYSVLWQIEQARQLGLPFVYLGYWIAQSPKMNYKLGFRPNEILQNGQWIASSTAKAISHE</sequence>
<keyword id="KW-0012">Acyltransferase</keyword>
<keyword id="KW-0963">Cytoplasm</keyword>
<keyword id="KW-1185">Reference proteome</keyword>
<keyword id="KW-0808">Transferase</keyword>
<name>BPT_POLNA</name>
<reference key="1">
    <citation type="journal article" date="2009" name="Environ. Microbiol.">
        <title>The genome of Polaromonas naphthalenivorans strain CJ2, isolated from coal tar-contaminated sediment, reveals physiological and metabolic versatility and evolution through extensive horizontal gene transfer.</title>
        <authorList>
            <person name="Yagi J.M."/>
            <person name="Sims D."/>
            <person name="Brettin T."/>
            <person name="Bruce D."/>
            <person name="Madsen E.L."/>
        </authorList>
    </citation>
    <scope>NUCLEOTIDE SEQUENCE [LARGE SCALE GENOMIC DNA]</scope>
    <source>
        <strain>CJ2</strain>
    </source>
</reference>
<comment type="function">
    <text evidence="1">Functions in the N-end rule pathway of protein degradation where it conjugates Leu from its aminoacyl-tRNA to the N-termini of proteins containing an N-terminal aspartate or glutamate.</text>
</comment>
<comment type="catalytic activity">
    <reaction evidence="1">
        <text>N-terminal L-glutamyl-[protein] + L-leucyl-tRNA(Leu) = N-terminal L-leucyl-L-glutamyl-[protein] + tRNA(Leu) + H(+)</text>
        <dbReference type="Rhea" id="RHEA:50412"/>
        <dbReference type="Rhea" id="RHEA-COMP:9613"/>
        <dbReference type="Rhea" id="RHEA-COMP:9622"/>
        <dbReference type="Rhea" id="RHEA-COMP:12664"/>
        <dbReference type="Rhea" id="RHEA-COMP:12668"/>
        <dbReference type="ChEBI" id="CHEBI:15378"/>
        <dbReference type="ChEBI" id="CHEBI:64721"/>
        <dbReference type="ChEBI" id="CHEBI:78442"/>
        <dbReference type="ChEBI" id="CHEBI:78494"/>
        <dbReference type="ChEBI" id="CHEBI:133041"/>
        <dbReference type="EC" id="2.3.2.29"/>
    </reaction>
</comment>
<comment type="catalytic activity">
    <reaction evidence="1">
        <text>N-terminal L-aspartyl-[protein] + L-leucyl-tRNA(Leu) = N-terminal L-leucyl-L-aspartyl-[protein] + tRNA(Leu) + H(+)</text>
        <dbReference type="Rhea" id="RHEA:50420"/>
        <dbReference type="Rhea" id="RHEA-COMP:9613"/>
        <dbReference type="Rhea" id="RHEA-COMP:9622"/>
        <dbReference type="Rhea" id="RHEA-COMP:12669"/>
        <dbReference type="Rhea" id="RHEA-COMP:12674"/>
        <dbReference type="ChEBI" id="CHEBI:15378"/>
        <dbReference type="ChEBI" id="CHEBI:64720"/>
        <dbReference type="ChEBI" id="CHEBI:78442"/>
        <dbReference type="ChEBI" id="CHEBI:78494"/>
        <dbReference type="ChEBI" id="CHEBI:133042"/>
        <dbReference type="EC" id="2.3.2.29"/>
    </reaction>
</comment>
<comment type="subcellular location">
    <subcellularLocation>
        <location evidence="1">Cytoplasm</location>
    </subcellularLocation>
</comment>
<comment type="similarity">
    <text evidence="1">Belongs to the R-transferase family. Bpt subfamily.</text>
</comment>
<proteinExistence type="inferred from homology"/>
<evidence type="ECO:0000255" key="1">
    <source>
        <dbReference type="HAMAP-Rule" id="MF_00689"/>
    </source>
</evidence>
<accession>A1VN09</accession>
<dbReference type="EC" id="2.3.2.29" evidence="1"/>
<dbReference type="EMBL" id="CP000529">
    <property type="protein sequence ID" value="ABM37037.1"/>
    <property type="molecule type" value="Genomic_DNA"/>
</dbReference>
<dbReference type="RefSeq" id="WP_011801123.1">
    <property type="nucleotide sequence ID" value="NC_008781.1"/>
</dbReference>
<dbReference type="SMR" id="A1VN09"/>
<dbReference type="STRING" id="365044.Pnap_1724"/>
<dbReference type="KEGG" id="pna:Pnap_1724"/>
<dbReference type="eggNOG" id="COG2935">
    <property type="taxonomic scope" value="Bacteria"/>
</dbReference>
<dbReference type="HOGENOM" id="CLU_077607_0_0_4"/>
<dbReference type="OrthoDB" id="9782022at2"/>
<dbReference type="Proteomes" id="UP000000644">
    <property type="component" value="Chromosome"/>
</dbReference>
<dbReference type="GO" id="GO:0005737">
    <property type="term" value="C:cytoplasm"/>
    <property type="evidence" value="ECO:0007669"/>
    <property type="project" value="UniProtKB-SubCell"/>
</dbReference>
<dbReference type="GO" id="GO:0004057">
    <property type="term" value="F:arginyl-tRNA--protein transferase activity"/>
    <property type="evidence" value="ECO:0007669"/>
    <property type="project" value="InterPro"/>
</dbReference>
<dbReference type="GO" id="GO:0008914">
    <property type="term" value="F:leucyl-tRNA--protein transferase activity"/>
    <property type="evidence" value="ECO:0007669"/>
    <property type="project" value="UniProtKB-UniRule"/>
</dbReference>
<dbReference type="GO" id="GO:0071596">
    <property type="term" value="P:ubiquitin-dependent protein catabolic process via the N-end rule pathway"/>
    <property type="evidence" value="ECO:0007669"/>
    <property type="project" value="InterPro"/>
</dbReference>
<dbReference type="HAMAP" id="MF_00689">
    <property type="entry name" value="Bpt"/>
    <property type="match status" value="1"/>
</dbReference>
<dbReference type="InterPro" id="IPR016181">
    <property type="entry name" value="Acyl_CoA_acyltransferase"/>
</dbReference>
<dbReference type="InterPro" id="IPR017138">
    <property type="entry name" value="Asp_Glu_LeuTrfase"/>
</dbReference>
<dbReference type="InterPro" id="IPR030700">
    <property type="entry name" value="N-end_Aminoacyl_Trfase"/>
</dbReference>
<dbReference type="InterPro" id="IPR007472">
    <property type="entry name" value="N-end_Aminoacyl_Trfase_C"/>
</dbReference>
<dbReference type="InterPro" id="IPR007471">
    <property type="entry name" value="N-end_Aminoacyl_Trfase_N"/>
</dbReference>
<dbReference type="NCBIfam" id="NF002341">
    <property type="entry name" value="PRK01305.1-1"/>
    <property type="match status" value="1"/>
</dbReference>
<dbReference type="NCBIfam" id="NF002342">
    <property type="entry name" value="PRK01305.1-3"/>
    <property type="match status" value="1"/>
</dbReference>
<dbReference type="NCBIfam" id="NF002346">
    <property type="entry name" value="PRK01305.2-3"/>
    <property type="match status" value="1"/>
</dbReference>
<dbReference type="PANTHER" id="PTHR21367">
    <property type="entry name" value="ARGININE-TRNA-PROTEIN TRANSFERASE 1"/>
    <property type="match status" value="1"/>
</dbReference>
<dbReference type="PANTHER" id="PTHR21367:SF1">
    <property type="entry name" value="ARGINYL-TRNA--PROTEIN TRANSFERASE 1"/>
    <property type="match status" value="1"/>
</dbReference>
<dbReference type="Pfam" id="PF04377">
    <property type="entry name" value="ATE_C"/>
    <property type="match status" value="1"/>
</dbReference>
<dbReference type="Pfam" id="PF04376">
    <property type="entry name" value="ATE_N"/>
    <property type="match status" value="1"/>
</dbReference>
<dbReference type="PIRSF" id="PIRSF037208">
    <property type="entry name" value="ATE_pro_prd"/>
    <property type="match status" value="1"/>
</dbReference>
<dbReference type="SUPFAM" id="SSF55729">
    <property type="entry name" value="Acyl-CoA N-acyltransferases (Nat)"/>
    <property type="match status" value="1"/>
</dbReference>